<keyword id="KW-1185">Reference proteome</keyword>
<protein>
    <recommendedName>
        <fullName>Uncharacterized protein C07A9.10</fullName>
    </recommendedName>
</protein>
<feature type="chain" id="PRO_0000065165" description="Uncharacterized protein C07A9.10">
    <location>
        <begin position="1"/>
        <end position="138"/>
    </location>
</feature>
<dbReference type="EMBL" id="BX284603">
    <property type="protein sequence ID" value="CAA82337.2"/>
    <property type="molecule type" value="Genomic_DNA"/>
</dbReference>
<dbReference type="PIR" id="S40702">
    <property type="entry name" value="S40702"/>
</dbReference>
<dbReference type="RefSeq" id="NP_001366675.1">
    <property type="nucleotide sequence ID" value="NM_001379867.2"/>
</dbReference>
<dbReference type="RefSeq" id="NP_499141.1">
    <property type="nucleotide sequence ID" value="NM_066740.1"/>
</dbReference>
<dbReference type="STRING" id="6239.C07A9.10.1"/>
<dbReference type="PaxDb" id="6239-C07A9.10"/>
<dbReference type="EnsemblMetazoa" id="C07A9.10.1">
    <property type="protein sequence ID" value="C07A9.10.1"/>
    <property type="gene ID" value="WBGene00007406"/>
</dbReference>
<dbReference type="GeneID" id="182358"/>
<dbReference type="UCSC" id="C07A9.10">
    <property type="organism name" value="c. elegans"/>
</dbReference>
<dbReference type="AGR" id="WB:WBGene00007406"/>
<dbReference type="WormBase" id="C07A9.10">
    <property type="protein sequence ID" value="CE54068"/>
    <property type="gene ID" value="WBGene00007406"/>
</dbReference>
<dbReference type="eggNOG" id="KOG1075">
    <property type="taxonomic scope" value="Eukaryota"/>
</dbReference>
<dbReference type="GeneTree" id="ENSGT01060000250949"/>
<dbReference type="HOGENOM" id="CLU_1095116_0_0_1"/>
<dbReference type="InParanoid" id="P34321"/>
<dbReference type="PhylomeDB" id="P34321"/>
<dbReference type="PRO" id="PR:P34321"/>
<dbReference type="Proteomes" id="UP000001940">
    <property type="component" value="Chromosome III"/>
</dbReference>
<proteinExistence type="predicted"/>
<accession>P34321</accession>
<sequence>MNVILQLLKRSSFEDHFRTCCVGTIHEELRKILSGEKDVVGDLRRMHSYSKLHKGRNMCTTALKVLMKDLAAECKRNTEVKVLHPTRFKSHLVCSAQGCKNPTIPDKPYFKVALPSGKAFTDMVVQKHHHLPIAPQIF</sequence>
<organism>
    <name type="scientific">Caenorhabditis elegans</name>
    <dbReference type="NCBI Taxonomy" id="6239"/>
    <lineage>
        <taxon>Eukaryota</taxon>
        <taxon>Metazoa</taxon>
        <taxon>Ecdysozoa</taxon>
        <taxon>Nematoda</taxon>
        <taxon>Chromadorea</taxon>
        <taxon>Rhabditida</taxon>
        <taxon>Rhabditina</taxon>
        <taxon>Rhabditomorpha</taxon>
        <taxon>Rhabditoidea</taxon>
        <taxon>Rhabditidae</taxon>
        <taxon>Peloderinae</taxon>
        <taxon>Caenorhabditis</taxon>
    </lineage>
</organism>
<evidence type="ECO:0000312" key="1">
    <source>
        <dbReference type="WormBase" id="C07A9.10"/>
    </source>
</evidence>
<reference key="1">
    <citation type="journal article" date="1994" name="Nature">
        <title>2.2 Mb of contiguous nucleotide sequence from chromosome III of C. elegans.</title>
        <authorList>
            <person name="Wilson R."/>
            <person name="Ainscough R."/>
            <person name="Anderson K."/>
            <person name="Baynes C."/>
            <person name="Berks M."/>
            <person name="Bonfield J."/>
            <person name="Burton J."/>
            <person name="Connell M."/>
            <person name="Copsey T."/>
            <person name="Cooper J."/>
            <person name="Coulson A."/>
            <person name="Craxton M."/>
            <person name="Dear S."/>
            <person name="Du Z."/>
            <person name="Durbin R."/>
            <person name="Favello A."/>
            <person name="Fraser A."/>
            <person name="Fulton L."/>
            <person name="Gardner A."/>
            <person name="Green P."/>
            <person name="Hawkins T."/>
            <person name="Hillier L."/>
            <person name="Jier M."/>
            <person name="Johnston L."/>
            <person name="Jones M."/>
            <person name="Kershaw J."/>
            <person name="Kirsten J."/>
            <person name="Laisster N."/>
            <person name="Latreille P."/>
            <person name="Lightning J."/>
            <person name="Lloyd C."/>
            <person name="Mortimore B."/>
            <person name="O'Callaghan M."/>
            <person name="Parsons J."/>
            <person name="Percy C."/>
            <person name="Rifken L."/>
            <person name="Roopra A."/>
            <person name="Saunders D."/>
            <person name="Shownkeen R."/>
            <person name="Sims M."/>
            <person name="Smaldon N."/>
            <person name="Smith A."/>
            <person name="Smith M."/>
            <person name="Sonnhammer E."/>
            <person name="Staden R."/>
            <person name="Sulston J."/>
            <person name="Thierry-Mieg J."/>
            <person name="Thomas K."/>
            <person name="Vaudin M."/>
            <person name="Vaughan K."/>
            <person name="Waterston R."/>
            <person name="Watson A."/>
            <person name="Weinstock L."/>
            <person name="Wilkinson-Sproat J."/>
            <person name="Wohldman P."/>
        </authorList>
    </citation>
    <scope>NUCLEOTIDE SEQUENCE [LARGE SCALE GENOMIC DNA]</scope>
    <source>
        <strain>Bristol N2</strain>
    </source>
</reference>
<reference key="2">
    <citation type="journal article" date="1998" name="Science">
        <title>Genome sequence of the nematode C. elegans: a platform for investigating biology.</title>
        <authorList>
            <consortium name="The C. elegans sequencing consortium"/>
        </authorList>
    </citation>
    <scope>NUCLEOTIDE SEQUENCE [LARGE SCALE GENOMIC DNA]</scope>
    <source>
        <strain>Bristol N2</strain>
    </source>
</reference>
<gene>
    <name evidence="1" type="ORF">C07A9.10</name>
</gene>
<name>YKT0_CAEEL</name>